<dbReference type="EMBL" id="AF332387">
    <property type="protein sequence ID" value="AAK06843.1"/>
    <property type="molecule type" value="mRNA"/>
</dbReference>
<dbReference type="VEuPathDB" id="FungiDB:T552_00259"/>
<dbReference type="GO" id="GO:0005730">
    <property type="term" value="C:nucleolus"/>
    <property type="evidence" value="ECO:0007669"/>
    <property type="project" value="UniProtKB-SubCell"/>
</dbReference>
<dbReference type="GO" id="GO:0005525">
    <property type="term" value="F:GTP binding"/>
    <property type="evidence" value="ECO:0007669"/>
    <property type="project" value="UniProtKB-KW"/>
</dbReference>
<dbReference type="GO" id="GO:0042254">
    <property type="term" value="P:ribosome biogenesis"/>
    <property type="evidence" value="ECO:0007669"/>
    <property type="project" value="UniProtKB-KW"/>
</dbReference>
<dbReference type="CDD" id="cd01858">
    <property type="entry name" value="NGP_1"/>
    <property type="match status" value="1"/>
</dbReference>
<dbReference type="FunFam" id="3.40.50.300:FF:000559">
    <property type="entry name" value="Nuclear/nucleolar GTPase 2"/>
    <property type="match status" value="1"/>
</dbReference>
<dbReference type="Gene3D" id="1.10.1580.10">
    <property type="match status" value="1"/>
</dbReference>
<dbReference type="Gene3D" id="3.40.50.300">
    <property type="entry name" value="P-loop containing nucleotide triphosphate hydrolases"/>
    <property type="match status" value="1"/>
</dbReference>
<dbReference type="InterPro" id="IPR030378">
    <property type="entry name" value="G_CP_dom"/>
</dbReference>
<dbReference type="InterPro" id="IPR024929">
    <property type="entry name" value="GNL2_CP_dom"/>
</dbReference>
<dbReference type="InterPro" id="IPR006073">
    <property type="entry name" value="GTP-bd"/>
</dbReference>
<dbReference type="InterPro" id="IPR023179">
    <property type="entry name" value="GTP-bd_ortho_bundle_sf"/>
</dbReference>
<dbReference type="InterPro" id="IPR012971">
    <property type="entry name" value="NOG2_N_dom"/>
</dbReference>
<dbReference type="InterPro" id="IPR027417">
    <property type="entry name" value="P-loop_NTPase"/>
</dbReference>
<dbReference type="InterPro" id="IPR050755">
    <property type="entry name" value="TRAFAC_YlqF/YawG_RiboMat"/>
</dbReference>
<dbReference type="PANTHER" id="PTHR11089">
    <property type="entry name" value="GTP-BINDING PROTEIN-RELATED"/>
    <property type="match status" value="1"/>
</dbReference>
<dbReference type="PANTHER" id="PTHR11089:SF9">
    <property type="entry name" value="NUCLEOLAR GTP-BINDING PROTEIN 2"/>
    <property type="match status" value="1"/>
</dbReference>
<dbReference type="Pfam" id="PF01926">
    <property type="entry name" value="MMR_HSR1"/>
    <property type="match status" value="1"/>
</dbReference>
<dbReference type="Pfam" id="PF08153">
    <property type="entry name" value="NGP1NT"/>
    <property type="match status" value="1"/>
</dbReference>
<dbReference type="PRINTS" id="PR00326">
    <property type="entry name" value="GTP1OBG"/>
</dbReference>
<dbReference type="SUPFAM" id="SSF52540">
    <property type="entry name" value="P-loop containing nucleoside triphosphate hydrolases"/>
    <property type="match status" value="1"/>
</dbReference>
<dbReference type="PROSITE" id="PS51721">
    <property type="entry name" value="G_CP"/>
    <property type="match status" value="1"/>
</dbReference>
<keyword id="KW-0342">GTP-binding</keyword>
<keyword id="KW-0547">Nucleotide-binding</keyword>
<keyword id="KW-0539">Nucleus</keyword>
<keyword id="KW-0690">Ribosome biogenesis</keyword>
<feature type="chain" id="PRO_0000215814" description="Nucleolar GTP-binding protein 2">
    <location>
        <begin position="1"/>
        <end position="483"/>
    </location>
</feature>
<feature type="domain" description="CP-type G" evidence="3">
    <location>
        <begin position="189"/>
        <end position="350"/>
    </location>
</feature>
<feature type="binding site" evidence="2">
    <location>
        <begin position="299"/>
        <end position="306"/>
    </location>
    <ligand>
        <name>GTP</name>
        <dbReference type="ChEBI" id="CHEBI:37565"/>
    </ligand>
</feature>
<feature type="binding site" evidence="2">
    <location>
        <begin position="343"/>
        <end position="347"/>
    </location>
    <ligand>
        <name>GTP</name>
        <dbReference type="ChEBI" id="CHEBI:37565"/>
    </ligand>
</feature>
<organism>
    <name type="scientific">Pneumocystis carinii</name>
    <dbReference type="NCBI Taxonomy" id="4754"/>
    <lineage>
        <taxon>Eukaryota</taxon>
        <taxon>Fungi</taxon>
        <taxon>Dikarya</taxon>
        <taxon>Ascomycota</taxon>
        <taxon>Taphrinomycotina</taxon>
        <taxon>Pneumocystomycetes</taxon>
        <taxon>Pneumocystaceae</taxon>
        <taxon>Pneumocystis</taxon>
    </lineage>
</organism>
<protein>
    <recommendedName>
        <fullName>Nucleolar GTP-binding protein 2</fullName>
    </recommendedName>
    <alternativeName>
        <fullName>Binding-inducible GTPase</fullName>
    </alternativeName>
</protein>
<sequence>MCCKAIKLGNARVFPVTTFRDAKKVRWINLLKSGKAKRNKSGKIIKQGEFQSKDVQDARIQPYRRWFSNTRVISQDVLNMFRESFAEKLNDPCKVLLKQNKLPMSLLMEPTKTRKANIIDIEPFDDTFGKKSXRKRAKLYASSIENLSNFAFESYENYIKKNSEYENVDKNIQKSFEAIFSKGTSKRIWNELYKXIDSSDVIIQLLDARNPLGTRCKHVEEYLKKEKPHKHMILLLNKCDLIPTWCTREWIKQLSKEYPTLAFHASINNPFGKGSLIQLLRQFSKLHSNRRQISVGFIGYPNTGKSSVINTLRSKKVCNTAPIPGETKVWQYVRMTSKIFMIDCPGIVPPNSNDSETEIIIKGALRIEKVSNPEQYIHAILNLCETKHLERTYQISGWENDSTKFIELLARKTGKLLKGGEVDESSIAKMVINDFIRGKIPWFIAPAQENDPSNIKLSNNTLVEKNHLTTLDDEIYNDANPNA</sequence>
<accession>Q9C3Z4</accession>
<gene>
    <name type="primary">NOG2</name>
</gene>
<proteinExistence type="evidence at transcript level"/>
<evidence type="ECO:0000250" key="1"/>
<evidence type="ECO:0000255" key="2"/>
<evidence type="ECO:0000255" key="3">
    <source>
        <dbReference type="PROSITE-ProRule" id="PRU01058"/>
    </source>
</evidence>
<reference key="1">
    <citation type="submission" date="2000-12" db="EMBL/GenBank/DDBJ databases">
        <title>Gene activation induced by binding to mammalian surfaces and alveolar cells.</title>
        <authorList>
            <person name="Kottom T.J."/>
            <person name="Limper A.H."/>
        </authorList>
    </citation>
    <scope>NUCLEOTIDE SEQUENCE [MRNA]</scope>
</reference>
<name>NOG2_PNECA</name>
<comment type="function">
    <text evidence="1">GTPase that associates with pre-60S ribosomal subunits in the nucleolus and is required for their nuclear export and maturation.</text>
</comment>
<comment type="subcellular location">
    <subcellularLocation>
        <location evidence="1">Nucleus</location>
        <location evidence="1">Nucleolus</location>
    </subcellularLocation>
</comment>
<comment type="similarity">
    <text evidence="3">Belongs to the TRAFAC class YlqF/YawG GTPase family. NOG2 subfamily.</text>
</comment>